<feature type="chain" id="PRO_0000094858" description="Tyrosine-protein phosphatase 1">
    <location>
        <begin position="1"/>
        <end position="550"/>
    </location>
</feature>
<feature type="domain" description="Tyrosine-protein phosphatase" evidence="1">
    <location>
        <begin position="260"/>
        <end position="539"/>
    </location>
</feature>
<feature type="active site" description="Phosphocysteine intermediate" evidence="1 2">
    <location>
        <position position="470"/>
    </location>
</feature>
<feature type="modified residue" description="Phosphoserine" evidence="3">
    <location>
        <position position="318"/>
    </location>
</feature>
<feature type="modified residue" description="Phosphoserine" evidence="3">
    <location>
        <position position="320"/>
    </location>
</feature>
<comment type="function">
    <text>Plays a role in inhibiting the onset of mitosis. Dephosphorylates sty1/spc1 and wis1/spc2/sty2.</text>
</comment>
<comment type="catalytic activity">
    <reaction evidence="2">
        <text>O-phospho-L-tyrosyl-[protein] + H2O = L-tyrosyl-[protein] + phosphate</text>
        <dbReference type="Rhea" id="RHEA:10684"/>
        <dbReference type="Rhea" id="RHEA-COMP:10136"/>
        <dbReference type="Rhea" id="RHEA-COMP:20101"/>
        <dbReference type="ChEBI" id="CHEBI:15377"/>
        <dbReference type="ChEBI" id="CHEBI:43474"/>
        <dbReference type="ChEBI" id="CHEBI:46858"/>
        <dbReference type="ChEBI" id="CHEBI:61978"/>
        <dbReference type="EC" id="3.1.3.48"/>
    </reaction>
</comment>
<comment type="subcellular location">
    <subcellularLocation>
        <location>Cytoplasm</location>
    </subcellularLocation>
</comment>
<comment type="similarity">
    <text evidence="4">Belongs to the protein-tyrosine phosphatase family. Non-receptor class subfamily.</text>
</comment>
<accession>P27574</accession>
<gene>
    <name type="primary">pyp1</name>
    <name type="ORF">SPAC26F1.10c</name>
</gene>
<keyword id="KW-0131">Cell cycle</keyword>
<keyword id="KW-0132">Cell division</keyword>
<keyword id="KW-0963">Cytoplasm</keyword>
<keyword id="KW-0378">Hydrolase</keyword>
<keyword id="KW-0498">Mitosis</keyword>
<keyword id="KW-0597">Phosphoprotein</keyword>
<keyword id="KW-0904">Protein phosphatase</keyword>
<keyword id="KW-1185">Reference proteome</keyword>
<name>PYP1_SCHPO</name>
<dbReference type="EC" id="3.1.3.48"/>
<dbReference type="EMBL" id="M63257">
    <property type="protein sequence ID" value="AAA35328.1"/>
    <property type="molecule type" value="mRNA"/>
</dbReference>
<dbReference type="EMBL" id="CU329670">
    <property type="protein sequence ID" value="CAA97367.1"/>
    <property type="molecule type" value="Genomic_DNA"/>
</dbReference>
<dbReference type="PIR" id="A40449">
    <property type="entry name" value="A40449"/>
</dbReference>
<dbReference type="RefSeq" id="NP_594885.1">
    <property type="nucleotide sequence ID" value="NM_001020314.2"/>
</dbReference>
<dbReference type="SMR" id="P27574"/>
<dbReference type="BioGRID" id="279130">
    <property type="interactions" value="245"/>
</dbReference>
<dbReference type="FunCoup" id="P27574">
    <property type="interactions" value="27"/>
</dbReference>
<dbReference type="STRING" id="284812.P27574"/>
<dbReference type="iPTMnet" id="P27574"/>
<dbReference type="PaxDb" id="4896-SPAC26F1.10c.1"/>
<dbReference type="EnsemblFungi" id="SPAC26F1.10c.1">
    <property type="protein sequence ID" value="SPAC26F1.10c.1:pep"/>
    <property type="gene ID" value="SPAC26F1.10c"/>
</dbReference>
<dbReference type="GeneID" id="2542677"/>
<dbReference type="KEGG" id="spo:2542677"/>
<dbReference type="PomBase" id="SPAC26F1.10c">
    <property type="gene designation" value="pyp1"/>
</dbReference>
<dbReference type="VEuPathDB" id="FungiDB:SPAC26F1.10c"/>
<dbReference type="eggNOG" id="KOG0789">
    <property type="taxonomic scope" value="Eukaryota"/>
</dbReference>
<dbReference type="HOGENOM" id="CLU_493601_0_0_1"/>
<dbReference type="InParanoid" id="P27574"/>
<dbReference type="OMA" id="YIACQGS"/>
<dbReference type="PhylomeDB" id="P27574"/>
<dbReference type="Reactome" id="R-SPO-5675221">
    <property type="pathway name" value="Negative regulation of MAPK pathway"/>
</dbReference>
<dbReference type="Reactome" id="R-SPO-6798695">
    <property type="pathway name" value="Neutrophil degranulation"/>
</dbReference>
<dbReference type="PRO" id="PR:P27574"/>
<dbReference type="Proteomes" id="UP000002485">
    <property type="component" value="Chromosome I"/>
</dbReference>
<dbReference type="GO" id="GO:0005737">
    <property type="term" value="C:cytoplasm"/>
    <property type="evidence" value="ECO:0000314"/>
    <property type="project" value="PomBase"/>
</dbReference>
<dbReference type="GO" id="GO:0005829">
    <property type="term" value="C:cytosol"/>
    <property type="evidence" value="ECO:0007005"/>
    <property type="project" value="PomBase"/>
</dbReference>
<dbReference type="GO" id="GO:0005634">
    <property type="term" value="C:nucleus"/>
    <property type="evidence" value="ECO:0007005"/>
    <property type="project" value="PomBase"/>
</dbReference>
<dbReference type="GO" id="GO:0140453">
    <property type="term" value="C:protein aggregate center"/>
    <property type="evidence" value="ECO:0000314"/>
    <property type="project" value="PomBase"/>
</dbReference>
<dbReference type="GO" id="GO:0033550">
    <property type="term" value="F:MAP kinase tyrosine phosphatase activity"/>
    <property type="evidence" value="ECO:0000314"/>
    <property type="project" value="PomBase"/>
</dbReference>
<dbReference type="GO" id="GO:0004725">
    <property type="term" value="F:protein tyrosine phosphatase activity"/>
    <property type="evidence" value="ECO:0000314"/>
    <property type="project" value="PomBase"/>
</dbReference>
<dbReference type="GO" id="GO:0051301">
    <property type="term" value="P:cell division"/>
    <property type="evidence" value="ECO:0007669"/>
    <property type="project" value="UniProtKB-KW"/>
</dbReference>
<dbReference type="GO" id="GO:1903753">
    <property type="term" value="P:negative regulation of p38MAPK cascade"/>
    <property type="evidence" value="ECO:0000315"/>
    <property type="project" value="PomBase"/>
</dbReference>
<dbReference type="GO" id="GO:1900744">
    <property type="term" value="P:regulation of p38MAPK cascade"/>
    <property type="evidence" value="ECO:0000316"/>
    <property type="project" value="PomBase"/>
</dbReference>
<dbReference type="GO" id="GO:0007165">
    <property type="term" value="P:signal transduction"/>
    <property type="evidence" value="ECO:0000318"/>
    <property type="project" value="GO_Central"/>
</dbReference>
<dbReference type="CDD" id="cd18533">
    <property type="entry name" value="PTP_fungal"/>
    <property type="match status" value="1"/>
</dbReference>
<dbReference type="FunFam" id="3.90.190.10:FF:000294">
    <property type="entry name" value="Tyrosine-protein phosphatase 2"/>
    <property type="match status" value="1"/>
</dbReference>
<dbReference type="Gene3D" id="3.90.190.10">
    <property type="entry name" value="Protein tyrosine phosphatase superfamily"/>
    <property type="match status" value="1"/>
</dbReference>
<dbReference type="Gene3D" id="3.40.250.10">
    <property type="entry name" value="Rhodanese-like domain"/>
    <property type="match status" value="1"/>
</dbReference>
<dbReference type="InterPro" id="IPR029021">
    <property type="entry name" value="Prot-tyrosine_phosphatase-like"/>
</dbReference>
<dbReference type="InterPro" id="IPR050348">
    <property type="entry name" value="Protein-Tyr_Phosphatase"/>
</dbReference>
<dbReference type="InterPro" id="IPR000242">
    <property type="entry name" value="PTP_cat"/>
</dbReference>
<dbReference type="InterPro" id="IPR001763">
    <property type="entry name" value="Rhodanese-like_dom"/>
</dbReference>
<dbReference type="InterPro" id="IPR036873">
    <property type="entry name" value="Rhodanese-like_dom_sf"/>
</dbReference>
<dbReference type="InterPro" id="IPR016130">
    <property type="entry name" value="Tyr_Pase_AS"/>
</dbReference>
<dbReference type="InterPro" id="IPR003595">
    <property type="entry name" value="Tyr_Pase_cat"/>
</dbReference>
<dbReference type="InterPro" id="IPR000387">
    <property type="entry name" value="Tyr_Pase_dom"/>
</dbReference>
<dbReference type="PANTHER" id="PTHR19134">
    <property type="entry name" value="RECEPTOR-TYPE TYROSINE-PROTEIN PHOSPHATASE"/>
    <property type="match status" value="1"/>
</dbReference>
<dbReference type="PANTHER" id="PTHR19134:SF529">
    <property type="entry name" value="TYROSINE-PROTEIN PHOSPHATASE 1"/>
    <property type="match status" value="1"/>
</dbReference>
<dbReference type="Pfam" id="PF00581">
    <property type="entry name" value="Rhodanese"/>
    <property type="match status" value="1"/>
</dbReference>
<dbReference type="Pfam" id="PF00102">
    <property type="entry name" value="Y_phosphatase"/>
    <property type="match status" value="1"/>
</dbReference>
<dbReference type="PRINTS" id="PR00700">
    <property type="entry name" value="PRTYPHPHTASE"/>
</dbReference>
<dbReference type="SMART" id="SM00194">
    <property type="entry name" value="PTPc"/>
    <property type="match status" value="1"/>
</dbReference>
<dbReference type="SMART" id="SM00404">
    <property type="entry name" value="PTPc_motif"/>
    <property type="match status" value="1"/>
</dbReference>
<dbReference type="SUPFAM" id="SSF52799">
    <property type="entry name" value="(Phosphotyrosine protein) phosphatases II"/>
    <property type="match status" value="1"/>
</dbReference>
<dbReference type="SUPFAM" id="SSF52821">
    <property type="entry name" value="Rhodanese/Cell cycle control phosphatase"/>
    <property type="match status" value="1"/>
</dbReference>
<dbReference type="PROSITE" id="PS00383">
    <property type="entry name" value="TYR_PHOSPHATASE_1"/>
    <property type="match status" value="1"/>
</dbReference>
<dbReference type="PROSITE" id="PS50056">
    <property type="entry name" value="TYR_PHOSPHATASE_2"/>
    <property type="match status" value="1"/>
</dbReference>
<dbReference type="PROSITE" id="PS50055">
    <property type="entry name" value="TYR_PHOSPHATASE_PTP"/>
    <property type="match status" value="1"/>
</dbReference>
<protein>
    <recommendedName>
        <fullName>Tyrosine-protein phosphatase 1</fullName>
        <ecNumber>3.1.3.48</ecNumber>
    </recommendedName>
    <alternativeName>
        <fullName>Protein-tyrosine phosphatase 1</fullName>
        <shortName>PTPase 1</shortName>
    </alternativeName>
</protein>
<organism>
    <name type="scientific">Schizosaccharomyces pombe (strain 972 / ATCC 24843)</name>
    <name type="common">Fission yeast</name>
    <dbReference type="NCBI Taxonomy" id="284812"/>
    <lineage>
        <taxon>Eukaryota</taxon>
        <taxon>Fungi</taxon>
        <taxon>Dikarya</taxon>
        <taxon>Ascomycota</taxon>
        <taxon>Taphrinomycotina</taxon>
        <taxon>Schizosaccharomycetes</taxon>
        <taxon>Schizosaccharomycetales</taxon>
        <taxon>Schizosaccharomycetaceae</taxon>
        <taxon>Schizosaccharomyces</taxon>
    </lineage>
</organism>
<proteinExistence type="evidence at protein level"/>
<evidence type="ECO:0000255" key="1">
    <source>
        <dbReference type="PROSITE-ProRule" id="PRU00160"/>
    </source>
</evidence>
<evidence type="ECO:0000255" key="2">
    <source>
        <dbReference type="PROSITE-ProRule" id="PRU10044"/>
    </source>
</evidence>
<evidence type="ECO:0000269" key="3">
    <source>
    </source>
</evidence>
<evidence type="ECO:0000305" key="4"/>
<sequence length="550" mass="61588">MNFSNGSKSSTFTIAPSGSCIALPPQRGVATSKYAVHASCLQEYLDKEAWKDDTLIIDLRPVSEFSKSRIKGSVNLSLPATLIKRPAFSVARIISNLHDVDDKRDFQNWQEFSSILVCVPAWIANYVTNAEVIGEKFRKESYSGDFGILDLDYSKVSGKYPSVIDNSPVKSKLGALPSARPRLSYSAAQTAPISLSSEGSDYFSRPPPTPNVAGLSLNNFFCPLPENKDNKSSPFGSATVQTPCLHSVPDAFTNPDVATLYQKFLRLQSLEHQRLVSCSDRNSQWSTVDSLSNTSYKKNRYTDIVPYNCTRVHLKRTSPSELDYINASFIKTETSNYIACQGSISRSISDFWHMVWDNVENIGTIVMLGSLFEAGREMCTAYWPSNGIGDKQVYGDYCVKQISEENVDNSRFILRKFEIQNANFPSVKKVHHYQYPNWSDCNSPENVKSMVEFLKYVNNSHGSGNTIVHCSAGVGRTGTFIVLDTILRFPESKLSGFNPSVADSSDVVFQLVDHIRKQRMKMVQTFTQFKYVYDLIDSLQKSQVHFPVLT</sequence>
<reference key="1">
    <citation type="journal article" date="1991" name="Proc. Natl. Acad. Sci. U.S.A.">
        <title>A fission-yeast gene encoding a protein with features of protein-tyrosine-phosphatases.</title>
        <authorList>
            <person name="Ottilie S."/>
            <person name="Chernoff J."/>
            <person name="Hannig G."/>
            <person name="Hoffman C.S."/>
            <person name="Erikson R.L."/>
        </authorList>
    </citation>
    <scope>NUCLEOTIDE SEQUENCE [MRNA]</scope>
</reference>
<reference key="2">
    <citation type="journal article" date="2002" name="Nature">
        <title>The genome sequence of Schizosaccharomyces pombe.</title>
        <authorList>
            <person name="Wood V."/>
            <person name="Gwilliam R."/>
            <person name="Rajandream M.A."/>
            <person name="Lyne M.H."/>
            <person name="Lyne R."/>
            <person name="Stewart A."/>
            <person name="Sgouros J.G."/>
            <person name="Peat N."/>
            <person name="Hayles J."/>
            <person name="Baker S.G."/>
            <person name="Basham D."/>
            <person name="Bowman S."/>
            <person name="Brooks K."/>
            <person name="Brown D."/>
            <person name="Brown S."/>
            <person name="Chillingworth T."/>
            <person name="Churcher C.M."/>
            <person name="Collins M."/>
            <person name="Connor R."/>
            <person name="Cronin A."/>
            <person name="Davis P."/>
            <person name="Feltwell T."/>
            <person name="Fraser A."/>
            <person name="Gentles S."/>
            <person name="Goble A."/>
            <person name="Hamlin N."/>
            <person name="Harris D.E."/>
            <person name="Hidalgo J."/>
            <person name="Hodgson G."/>
            <person name="Holroyd S."/>
            <person name="Hornsby T."/>
            <person name="Howarth S."/>
            <person name="Huckle E.J."/>
            <person name="Hunt S."/>
            <person name="Jagels K."/>
            <person name="James K.D."/>
            <person name="Jones L."/>
            <person name="Jones M."/>
            <person name="Leather S."/>
            <person name="McDonald S."/>
            <person name="McLean J."/>
            <person name="Mooney P."/>
            <person name="Moule S."/>
            <person name="Mungall K.L."/>
            <person name="Murphy L.D."/>
            <person name="Niblett D."/>
            <person name="Odell C."/>
            <person name="Oliver K."/>
            <person name="O'Neil S."/>
            <person name="Pearson D."/>
            <person name="Quail M.A."/>
            <person name="Rabbinowitsch E."/>
            <person name="Rutherford K.M."/>
            <person name="Rutter S."/>
            <person name="Saunders D."/>
            <person name="Seeger K."/>
            <person name="Sharp S."/>
            <person name="Skelton J."/>
            <person name="Simmonds M.N."/>
            <person name="Squares R."/>
            <person name="Squares S."/>
            <person name="Stevens K."/>
            <person name="Taylor K."/>
            <person name="Taylor R.G."/>
            <person name="Tivey A."/>
            <person name="Walsh S.V."/>
            <person name="Warren T."/>
            <person name="Whitehead S."/>
            <person name="Woodward J.R."/>
            <person name="Volckaert G."/>
            <person name="Aert R."/>
            <person name="Robben J."/>
            <person name="Grymonprez B."/>
            <person name="Weltjens I."/>
            <person name="Vanstreels E."/>
            <person name="Rieger M."/>
            <person name="Schaefer M."/>
            <person name="Mueller-Auer S."/>
            <person name="Gabel C."/>
            <person name="Fuchs M."/>
            <person name="Duesterhoeft A."/>
            <person name="Fritzc C."/>
            <person name="Holzer E."/>
            <person name="Moestl D."/>
            <person name="Hilbert H."/>
            <person name="Borzym K."/>
            <person name="Langer I."/>
            <person name="Beck A."/>
            <person name="Lehrach H."/>
            <person name="Reinhardt R."/>
            <person name="Pohl T.M."/>
            <person name="Eger P."/>
            <person name="Zimmermann W."/>
            <person name="Wedler H."/>
            <person name="Wambutt R."/>
            <person name="Purnelle B."/>
            <person name="Goffeau A."/>
            <person name="Cadieu E."/>
            <person name="Dreano S."/>
            <person name="Gloux S."/>
            <person name="Lelaure V."/>
            <person name="Mottier S."/>
            <person name="Galibert F."/>
            <person name="Aves S.J."/>
            <person name="Xiang Z."/>
            <person name="Hunt C."/>
            <person name="Moore K."/>
            <person name="Hurst S.M."/>
            <person name="Lucas M."/>
            <person name="Rochet M."/>
            <person name="Gaillardin C."/>
            <person name="Tallada V.A."/>
            <person name="Garzon A."/>
            <person name="Thode G."/>
            <person name="Daga R.R."/>
            <person name="Cruzado L."/>
            <person name="Jimenez J."/>
            <person name="Sanchez M."/>
            <person name="del Rey F."/>
            <person name="Benito J."/>
            <person name="Dominguez A."/>
            <person name="Revuelta J.L."/>
            <person name="Moreno S."/>
            <person name="Armstrong J."/>
            <person name="Forsburg S.L."/>
            <person name="Cerutti L."/>
            <person name="Lowe T."/>
            <person name="McCombie W.R."/>
            <person name="Paulsen I."/>
            <person name="Potashkin J."/>
            <person name="Shpakovski G.V."/>
            <person name="Ussery D."/>
            <person name="Barrell B.G."/>
            <person name="Nurse P."/>
        </authorList>
    </citation>
    <scope>NUCLEOTIDE SEQUENCE [LARGE SCALE GENOMIC DNA]</scope>
    <source>
        <strain>972 / ATCC 24843</strain>
    </source>
</reference>
<reference key="3">
    <citation type="journal article" date="1992" name="EMBO J.">
        <title>Negative regulation of mitosis by two functionally overlapping PTPases in fission yeast.</title>
        <authorList>
            <person name="Millar J.B.A."/>
            <person name="Russell P."/>
            <person name="Dixon J.E."/>
            <person name="Guan K.L."/>
        </authorList>
    </citation>
    <scope>CHARACTERIZATION</scope>
</reference>
<reference key="4">
    <citation type="journal article" date="1995" name="Genes Dev.">
        <title>Pyp1 and Pyp2 PTPases dephosphorylate an osmosensing MAP kinase controlling cell size at division in fission yeast.</title>
        <authorList>
            <person name="Millar J.B.A."/>
            <person name="Buck V."/>
            <person name="Wilkinson M.G."/>
        </authorList>
    </citation>
    <scope>CHARACTERIZATION</scope>
</reference>
<reference key="5">
    <citation type="journal article" date="2008" name="J. Proteome Res.">
        <title>Phosphoproteome analysis of fission yeast.</title>
        <authorList>
            <person name="Wilson-Grady J.T."/>
            <person name="Villen J."/>
            <person name="Gygi S.P."/>
        </authorList>
    </citation>
    <scope>PHOSPHORYLATION [LARGE SCALE ANALYSIS] AT SER-318 AND SER-320</scope>
    <scope>IDENTIFICATION BY MASS SPECTROMETRY</scope>
</reference>